<proteinExistence type="inferred from homology"/>
<gene>
    <name type="ordered locus">Rfer_3156</name>
</gene>
<sequence>MDTRLLELLVCPVTKGPLEYNREKQELTSRSARLAYPVRDGVPILLESEARTLSDEELGL</sequence>
<keyword id="KW-1185">Reference proteome</keyword>
<dbReference type="EMBL" id="CP000267">
    <property type="protein sequence ID" value="ABD70865.1"/>
    <property type="molecule type" value="Genomic_DNA"/>
</dbReference>
<dbReference type="RefSeq" id="WP_011465428.1">
    <property type="nucleotide sequence ID" value="NC_007908.1"/>
</dbReference>
<dbReference type="SMR" id="Q21TN8"/>
<dbReference type="STRING" id="338969.Rfer_3156"/>
<dbReference type="KEGG" id="rfr:Rfer_3156"/>
<dbReference type="eggNOG" id="COG2835">
    <property type="taxonomic scope" value="Bacteria"/>
</dbReference>
<dbReference type="HOGENOM" id="CLU_155659_3_1_4"/>
<dbReference type="OrthoDB" id="9812205at2"/>
<dbReference type="Proteomes" id="UP000008332">
    <property type="component" value="Chromosome"/>
</dbReference>
<dbReference type="GO" id="GO:0005829">
    <property type="term" value="C:cytosol"/>
    <property type="evidence" value="ECO:0007669"/>
    <property type="project" value="TreeGrafter"/>
</dbReference>
<dbReference type="FunFam" id="2.20.25.10:FF:000002">
    <property type="entry name" value="UPF0434 protein YcaR"/>
    <property type="match status" value="1"/>
</dbReference>
<dbReference type="Gene3D" id="2.20.25.10">
    <property type="match status" value="1"/>
</dbReference>
<dbReference type="HAMAP" id="MF_01187">
    <property type="entry name" value="UPF0434"/>
    <property type="match status" value="1"/>
</dbReference>
<dbReference type="InterPro" id="IPR005651">
    <property type="entry name" value="Trm112-like"/>
</dbReference>
<dbReference type="PANTHER" id="PTHR33505:SF4">
    <property type="entry name" value="PROTEIN PREY, MITOCHONDRIAL"/>
    <property type="match status" value="1"/>
</dbReference>
<dbReference type="PANTHER" id="PTHR33505">
    <property type="entry name" value="ZGC:162634"/>
    <property type="match status" value="1"/>
</dbReference>
<dbReference type="Pfam" id="PF03966">
    <property type="entry name" value="Trm112p"/>
    <property type="match status" value="1"/>
</dbReference>
<dbReference type="SUPFAM" id="SSF158997">
    <property type="entry name" value="Trm112p-like"/>
    <property type="match status" value="1"/>
</dbReference>
<comment type="similarity">
    <text evidence="1">Belongs to the UPF0434 family.</text>
</comment>
<protein>
    <recommendedName>
        <fullName evidence="1">UPF0434 protein Rfer_3156</fullName>
    </recommendedName>
</protein>
<feature type="chain" id="PRO_0000291150" description="UPF0434 protein Rfer_3156">
    <location>
        <begin position="1"/>
        <end position="60"/>
    </location>
</feature>
<name>Y3156_ALBFT</name>
<organism>
    <name type="scientific">Albidiferax ferrireducens (strain ATCC BAA-621 / DSM 15236 / T118)</name>
    <name type="common">Rhodoferax ferrireducens</name>
    <dbReference type="NCBI Taxonomy" id="338969"/>
    <lineage>
        <taxon>Bacteria</taxon>
        <taxon>Pseudomonadati</taxon>
        <taxon>Pseudomonadota</taxon>
        <taxon>Betaproteobacteria</taxon>
        <taxon>Burkholderiales</taxon>
        <taxon>Comamonadaceae</taxon>
        <taxon>Rhodoferax</taxon>
    </lineage>
</organism>
<accession>Q21TN8</accession>
<evidence type="ECO:0000255" key="1">
    <source>
        <dbReference type="HAMAP-Rule" id="MF_01187"/>
    </source>
</evidence>
<reference key="1">
    <citation type="submission" date="2006-02" db="EMBL/GenBank/DDBJ databases">
        <title>Complete sequence of chromosome of Rhodoferax ferrireducens DSM 15236.</title>
        <authorList>
            <person name="Copeland A."/>
            <person name="Lucas S."/>
            <person name="Lapidus A."/>
            <person name="Barry K."/>
            <person name="Detter J.C."/>
            <person name="Glavina del Rio T."/>
            <person name="Hammon N."/>
            <person name="Israni S."/>
            <person name="Pitluck S."/>
            <person name="Brettin T."/>
            <person name="Bruce D."/>
            <person name="Han C."/>
            <person name="Tapia R."/>
            <person name="Gilna P."/>
            <person name="Kiss H."/>
            <person name="Schmutz J."/>
            <person name="Larimer F."/>
            <person name="Land M."/>
            <person name="Kyrpides N."/>
            <person name="Ivanova N."/>
            <person name="Richardson P."/>
        </authorList>
    </citation>
    <scope>NUCLEOTIDE SEQUENCE [LARGE SCALE GENOMIC DNA]</scope>
    <source>
        <strain>ATCC BAA-621 / DSM 15236 / T118</strain>
    </source>
</reference>